<reference key="1">
    <citation type="journal article" date="2007" name="ISME J.">
        <title>Population level functional diversity in a microbial community revealed by comparative genomic and metagenomic analyses.</title>
        <authorList>
            <person name="Bhaya D."/>
            <person name="Grossman A.R."/>
            <person name="Steunou A.-S."/>
            <person name="Khuri N."/>
            <person name="Cohan F.M."/>
            <person name="Hamamura N."/>
            <person name="Melendrez M.C."/>
            <person name="Bateson M.M."/>
            <person name="Ward D.M."/>
            <person name="Heidelberg J.F."/>
        </authorList>
    </citation>
    <scope>NUCLEOTIDE SEQUENCE [LARGE SCALE GENOMIC DNA]</scope>
    <source>
        <strain>JA-2-3B'a(2-13)</strain>
    </source>
</reference>
<keyword id="KW-0320">Glycogen biosynthesis</keyword>
<keyword id="KW-0328">Glycosyltransferase</keyword>
<keyword id="KW-1185">Reference proteome</keyword>
<keyword id="KW-0808">Transferase</keyword>
<sequence>MYIVQIASECAPVIKAGGLGDVVYGLSRELEVRGHCVELVLPKYDTMRYDQIWGLHDAYRDLWVPWYGGAIHCSVYCGWVHGRLCFFIEPHSGDNFFNRGCYYGCPDDNMRFAFFSKAALEFLLQSNKRPDIIHCHDWQTGLVPVLLFEIYKYHGMGNQRVCYTIHNFKHQGFGGPEILWATGLNREPYYFHYDRLRDNFNPFSLNFMKGGIVFSNFVTTVSPNHALEVQFGDYGYGLGHTLYLHRHKFRGVLNGIDYDIWNPEIDRFIPVRYTAQTLENKAKNKKALRDRLLLQDVDKPIVAYIGRLDEQKGVHLVHHAIYRSLFKNAQFVLLGSATERGIGAWFAHEKSYLNNNPDVHIELGFNEELSHLIYAGADIIVVPSHYEPCGLTQMIGLKYGTVPVVRGVGGLVDTVFDRDYDPHKLPEQRNGYVFYHTDPAALESALDRAIDLWYTAPDQFRQLQIQGMSYDYSWNYPGKEYLEIYDFIRHR</sequence>
<comment type="function">
    <text evidence="1">Synthesizes alpha-1,4-glucan chains using ADP-glucose.</text>
</comment>
<comment type="catalytic activity">
    <reaction evidence="1">
        <text>[(1-&gt;4)-alpha-D-glucosyl](n) + ADP-alpha-D-glucose = [(1-&gt;4)-alpha-D-glucosyl](n+1) + ADP + H(+)</text>
        <dbReference type="Rhea" id="RHEA:18189"/>
        <dbReference type="Rhea" id="RHEA-COMP:9584"/>
        <dbReference type="Rhea" id="RHEA-COMP:9587"/>
        <dbReference type="ChEBI" id="CHEBI:15378"/>
        <dbReference type="ChEBI" id="CHEBI:15444"/>
        <dbReference type="ChEBI" id="CHEBI:57498"/>
        <dbReference type="ChEBI" id="CHEBI:456216"/>
        <dbReference type="EC" id="2.4.1.21"/>
    </reaction>
</comment>
<comment type="pathway">
    <text evidence="1">Glycan biosynthesis; glycogen biosynthesis.</text>
</comment>
<comment type="similarity">
    <text evidence="1">Belongs to the glycosyltransferase 1 family. Bacterial/plant glycogen synthase subfamily.</text>
</comment>
<accession>Q2JNM6</accession>
<evidence type="ECO:0000255" key="1">
    <source>
        <dbReference type="HAMAP-Rule" id="MF_00484"/>
    </source>
</evidence>
<protein>
    <recommendedName>
        <fullName evidence="1">Glycogen synthase 1</fullName>
        <ecNumber evidence="1">2.4.1.21</ecNumber>
    </recommendedName>
    <alternativeName>
        <fullName evidence="1">Starch [bacterial glycogen] synthase 1</fullName>
    </alternativeName>
</protein>
<name>GLGA1_SYNJB</name>
<organism>
    <name type="scientific">Synechococcus sp. (strain JA-2-3B'a(2-13))</name>
    <name type="common">Cyanobacteria bacterium Yellowstone B-Prime</name>
    <dbReference type="NCBI Taxonomy" id="321332"/>
    <lineage>
        <taxon>Bacteria</taxon>
        <taxon>Bacillati</taxon>
        <taxon>Cyanobacteriota</taxon>
        <taxon>Cyanophyceae</taxon>
        <taxon>Synechococcales</taxon>
        <taxon>Synechococcaceae</taxon>
        <taxon>Synechococcus</taxon>
    </lineage>
</organism>
<proteinExistence type="inferred from homology"/>
<dbReference type="EC" id="2.4.1.21" evidence="1"/>
<dbReference type="EMBL" id="CP000240">
    <property type="protein sequence ID" value="ABD01633.1"/>
    <property type="molecule type" value="Genomic_DNA"/>
</dbReference>
<dbReference type="SMR" id="Q2JNM6"/>
<dbReference type="STRING" id="321332.CYB_0646"/>
<dbReference type="CAZy" id="GT5">
    <property type="family name" value="Glycosyltransferase Family 5"/>
</dbReference>
<dbReference type="KEGG" id="cyb:CYB_0646"/>
<dbReference type="eggNOG" id="COG0297">
    <property type="taxonomic scope" value="Bacteria"/>
</dbReference>
<dbReference type="HOGENOM" id="CLU_009583_18_3_3"/>
<dbReference type="OrthoDB" id="9808590at2"/>
<dbReference type="UniPathway" id="UPA00164"/>
<dbReference type="Proteomes" id="UP000001938">
    <property type="component" value="Chromosome"/>
</dbReference>
<dbReference type="GO" id="GO:0009011">
    <property type="term" value="F:alpha-1,4-glucan glucosyltransferase (ADP-glucose donor) activity"/>
    <property type="evidence" value="ECO:0007669"/>
    <property type="project" value="UniProtKB-UniRule"/>
</dbReference>
<dbReference type="GO" id="GO:0004373">
    <property type="term" value="F:alpha-1,4-glucan glucosyltransferase (UDP-glucose donor) activity"/>
    <property type="evidence" value="ECO:0007669"/>
    <property type="project" value="InterPro"/>
</dbReference>
<dbReference type="GO" id="GO:0005978">
    <property type="term" value="P:glycogen biosynthetic process"/>
    <property type="evidence" value="ECO:0007669"/>
    <property type="project" value="UniProtKB-UniRule"/>
</dbReference>
<dbReference type="CDD" id="cd03791">
    <property type="entry name" value="GT5_Glycogen_synthase_DULL1-like"/>
    <property type="match status" value="1"/>
</dbReference>
<dbReference type="Gene3D" id="3.40.50.2000">
    <property type="entry name" value="Glycogen Phosphorylase B"/>
    <property type="match status" value="2"/>
</dbReference>
<dbReference type="HAMAP" id="MF_00484">
    <property type="entry name" value="Glycogen_synth"/>
    <property type="match status" value="1"/>
</dbReference>
<dbReference type="InterPro" id="IPR001296">
    <property type="entry name" value="Glyco_trans_1"/>
</dbReference>
<dbReference type="InterPro" id="IPR011835">
    <property type="entry name" value="GS/SS"/>
</dbReference>
<dbReference type="InterPro" id="IPR013534">
    <property type="entry name" value="Starch_synth_cat_dom"/>
</dbReference>
<dbReference type="NCBIfam" id="TIGR02095">
    <property type="entry name" value="glgA"/>
    <property type="match status" value="1"/>
</dbReference>
<dbReference type="NCBIfam" id="NF001902">
    <property type="entry name" value="PRK00654.2-1"/>
    <property type="match status" value="1"/>
</dbReference>
<dbReference type="NCBIfam" id="NF001905">
    <property type="entry name" value="PRK00654.2-4"/>
    <property type="match status" value="1"/>
</dbReference>
<dbReference type="PANTHER" id="PTHR46083">
    <property type="match status" value="1"/>
</dbReference>
<dbReference type="PANTHER" id="PTHR46083:SF1">
    <property type="entry name" value="GLYCOGEN SYNTHASE 2-RELATED"/>
    <property type="match status" value="1"/>
</dbReference>
<dbReference type="Pfam" id="PF08323">
    <property type="entry name" value="Glyco_transf_5"/>
    <property type="match status" value="1"/>
</dbReference>
<dbReference type="Pfam" id="PF00534">
    <property type="entry name" value="Glycos_transf_1"/>
    <property type="match status" value="1"/>
</dbReference>
<dbReference type="SUPFAM" id="SSF53756">
    <property type="entry name" value="UDP-Glycosyltransferase/glycogen phosphorylase"/>
    <property type="match status" value="1"/>
</dbReference>
<feature type="chain" id="PRO_0000241802" description="Glycogen synthase 1">
    <location>
        <begin position="1"/>
        <end position="491"/>
    </location>
</feature>
<feature type="binding site" evidence="1">
    <location>
        <position position="15"/>
    </location>
    <ligand>
        <name>ADP-alpha-D-glucose</name>
        <dbReference type="ChEBI" id="CHEBI:57498"/>
    </ligand>
</feature>
<gene>
    <name evidence="1" type="primary">glgA1</name>
    <name type="ordered locus">CYB_0646</name>
</gene>